<protein>
    <recommendedName>
        <fullName evidence="1">Probable GTP-binding protein EngB</fullName>
    </recommendedName>
</protein>
<proteinExistence type="inferred from homology"/>
<comment type="function">
    <text evidence="1">Necessary for normal cell division and for the maintenance of normal septation.</text>
</comment>
<comment type="cofactor">
    <cofactor evidence="1">
        <name>Mg(2+)</name>
        <dbReference type="ChEBI" id="CHEBI:18420"/>
    </cofactor>
</comment>
<comment type="similarity">
    <text evidence="1">Belongs to the TRAFAC class TrmE-Era-EngA-EngB-Septin-like GTPase superfamily. EngB GTPase family.</text>
</comment>
<gene>
    <name evidence="1" type="primary">engB</name>
    <name type="ordered locus">aq_1815</name>
</gene>
<dbReference type="EMBL" id="AE000657">
    <property type="protein sequence ID" value="AAC07648.1"/>
    <property type="molecule type" value="Genomic_DNA"/>
</dbReference>
<dbReference type="PIR" id="E70456">
    <property type="entry name" value="E70456"/>
</dbReference>
<dbReference type="RefSeq" id="NP_214245.1">
    <property type="nucleotide sequence ID" value="NC_000918.1"/>
</dbReference>
<dbReference type="RefSeq" id="WP_010881182.1">
    <property type="nucleotide sequence ID" value="NC_000918.1"/>
</dbReference>
<dbReference type="SMR" id="O67679"/>
<dbReference type="FunCoup" id="O67679">
    <property type="interactions" value="321"/>
</dbReference>
<dbReference type="STRING" id="224324.aq_1815"/>
<dbReference type="EnsemblBacteria" id="AAC07648">
    <property type="protein sequence ID" value="AAC07648"/>
    <property type="gene ID" value="aq_1815"/>
</dbReference>
<dbReference type="KEGG" id="aae:aq_1815"/>
<dbReference type="PATRIC" id="fig|224324.8.peg.1402"/>
<dbReference type="eggNOG" id="COG0218">
    <property type="taxonomic scope" value="Bacteria"/>
</dbReference>
<dbReference type="HOGENOM" id="CLU_033732_3_0_0"/>
<dbReference type="InParanoid" id="O67679"/>
<dbReference type="OrthoDB" id="9804921at2"/>
<dbReference type="Proteomes" id="UP000000798">
    <property type="component" value="Chromosome"/>
</dbReference>
<dbReference type="GO" id="GO:0005829">
    <property type="term" value="C:cytosol"/>
    <property type="evidence" value="ECO:0000318"/>
    <property type="project" value="GO_Central"/>
</dbReference>
<dbReference type="GO" id="GO:0005525">
    <property type="term" value="F:GTP binding"/>
    <property type="evidence" value="ECO:0007669"/>
    <property type="project" value="UniProtKB-UniRule"/>
</dbReference>
<dbReference type="GO" id="GO:0046872">
    <property type="term" value="F:metal ion binding"/>
    <property type="evidence" value="ECO:0007669"/>
    <property type="project" value="UniProtKB-KW"/>
</dbReference>
<dbReference type="GO" id="GO:0000917">
    <property type="term" value="P:division septum assembly"/>
    <property type="evidence" value="ECO:0007669"/>
    <property type="project" value="UniProtKB-KW"/>
</dbReference>
<dbReference type="CDD" id="cd01876">
    <property type="entry name" value="YihA_EngB"/>
    <property type="match status" value="1"/>
</dbReference>
<dbReference type="Gene3D" id="3.40.50.300">
    <property type="entry name" value="P-loop containing nucleotide triphosphate hydrolases"/>
    <property type="match status" value="1"/>
</dbReference>
<dbReference type="HAMAP" id="MF_00321">
    <property type="entry name" value="GTPase_EngB"/>
    <property type="match status" value="1"/>
</dbReference>
<dbReference type="InterPro" id="IPR030393">
    <property type="entry name" value="G_ENGB_dom"/>
</dbReference>
<dbReference type="InterPro" id="IPR006073">
    <property type="entry name" value="GTP-bd"/>
</dbReference>
<dbReference type="InterPro" id="IPR019987">
    <property type="entry name" value="GTP-bd_ribosome_bio_YsxC"/>
</dbReference>
<dbReference type="InterPro" id="IPR027417">
    <property type="entry name" value="P-loop_NTPase"/>
</dbReference>
<dbReference type="InterPro" id="IPR005225">
    <property type="entry name" value="Small_GTP-bd"/>
</dbReference>
<dbReference type="NCBIfam" id="TIGR03598">
    <property type="entry name" value="GTPase_YsxC"/>
    <property type="match status" value="1"/>
</dbReference>
<dbReference type="NCBIfam" id="TIGR00231">
    <property type="entry name" value="small_GTP"/>
    <property type="match status" value="1"/>
</dbReference>
<dbReference type="PANTHER" id="PTHR11649:SF13">
    <property type="entry name" value="ENGB-TYPE G DOMAIN-CONTAINING PROTEIN"/>
    <property type="match status" value="1"/>
</dbReference>
<dbReference type="PANTHER" id="PTHR11649">
    <property type="entry name" value="MSS1/TRME-RELATED GTP-BINDING PROTEIN"/>
    <property type="match status" value="1"/>
</dbReference>
<dbReference type="Pfam" id="PF01926">
    <property type="entry name" value="MMR_HSR1"/>
    <property type="match status" value="1"/>
</dbReference>
<dbReference type="SUPFAM" id="SSF52540">
    <property type="entry name" value="P-loop containing nucleoside triphosphate hydrolases"/>
    <property type="match status" value="1"/>
</dbReference>
<dbReference type="PROSITE" id="PS51706">
    <property type="entry name" value="G_ENGB"/>
    <property type="match status" value="1"/>
</dbReference>
<name>ENGB_AQUAE</name>
<feature type="chain" id="PRO_0000157734" description="Probable GTP-binding protein EngB">
    <location>
        <begin position="1"/>
        <end position="183"/>
    </location>
</feature>
<feature type="domain" description="EngB-type G" evidence="1">
    <location>
        <begin position="17"/>
        <end position="183"/>
    </location>
</feature>
<feature type="binding site" evidence="1">
    <location>
        <begin position="25"/>
        <end position="32"/>
    </location>
    <ligand>
        <name>GTP</name>
        <dbReference type="ChEBI" id="CHEBI:37565"/>
    </ligand>
</feature>
<feature type="binding site" evidence="1">
    <location>
        <position position="32"/>
    </location>
    <ligand>
        <name>Mg(2+)</name>
        <dbReference type="ChEBI" id="CHEBI:18420"/>
    </ligand>
</feature>
<feature type="binding site" evidence="1">
    <location>
        <begin position="51"/>
        <end position="55"/>
    </location>
    <ligand>
        <name>GTP</name>
        <dbReference type="ChEBI" id="CHEBI:37565"/>
    </ligand>
</feature>
<feature type="binding site" evidence="1">
    <location>
        <position position="53"/>
    </location>
    <ligand>
        <name>Mg(2+)</name>
        <dbReference type="ChEBI" id="CHEBI:18420"/>
    </ligand>
</feature>
<feature type="binding site" evidence="1">
    <location>
        <begin position="69"/>
        <end position="72"/>
    </location>
    <ligand>
        <name>GTP</name>
        <dbReference type="ChEBI" id="CHEBI:37565"/>
    </ligand>
</feature>
<feature type="binding site" evidence="1">
    <location>
        <begin position="137"/>
        <end position="140"/>
    </location>
    <ligand>
        <name>GTP</name>
        <dbReference type="ChEBI" id="CHEBI:37565"/>
    </ligand>
</feature>
<feature type="binding site" evidence="1">
    <location>
        <begin position="166"/>
        <end position="168"/>
    </location>
    <ligand>
        <name>GTP</name>
        <dbReference type="ChEBI" id="CHEBI:37565"/>
    </ligand>
</feature>
<evidence type="ECO:0000255" key="1">
    <source>
        <dbReference type="HAMAP-Rule" id="MF_00321"/>
    </source>
</evidence>
<sequence>MKVKFLGSFFEEFPPPDYPEVVFVGRSNVGKSSLLNMVVGSKVAKVSKTPGRTRAVNYFLLDKKLYLVDVPGYGYAKVGREEMEKWRKMMERYFKERKDNIKMAFLLIDAVAGVQPLDEQMIEWFEYYGIPFTVVITKIDKASQSEIAKTLKQVKRYVGDGAIVLSSAKEGKGKKELLSRILN</sequence>
<reference key="1">
    <citation type="journal article" date="1998" name="Nature">
        <title>The complete genome of the hyperthermophilic bacterium Aquifex aeolicus.</title>
        <authorList>
            <person name="Deckert G."/>
            <person name="Warren P.V."/>
            <person name="Gaasterland T."/>
            <person name="Young W.G."/>
            <person name="Lenox A.L."/>
            <person name="Graham D.E."/>
            <person name="Overbeek R."/>
            <person name="Snead M.A."/>
            <person name="Keller M."/>
            <person name="Aujay M."/>
            <person name="Huber R."/>
            <person name="Feldman R.A."/>
            <person name="Short J.M."/>
            <person name="Olsen G.J."/>
            <person name="Swanson R.V."/>
        </authorList>
    </citation>
    <scope>NUCLEOTIDE SEQUENCE [LARGE SCALE GENOMIC DNA]</scope>
    <source>
        <strain>VF5</strain>
    </source>
</reference>
<organism>
    <name type="scientific">Aquifex aeolicus (strain VF5)</name>
    <dbReference type="NCBI Taxonomy" id="224324"/>
    <lineage>
        <taxon>Bacteria</taxon>
        <taxon>Pseudomonadati</taxon>
        <taxon>Aquificota</taxon>
        <taxon>Aquificia</taxon>
        <taxon>Aquificales</taxon>
        <taxon>Aquificaceae</taxon>
        <taxon>Aquifex</taxon>
    </lineage>
</organism>
<keyword id="KW-0131">Cell cycle</keyword>
<keyword id="KW-0132">Cell division</keyword>
<keyword id="KW-0342">GTP-binding</keyword>
<keyword id="KW-0460">Magnesium</keyword>
<keyword id="KW-0479">Metal-binding</keyword>
<keyword id="KW-0547">Nucleotide-binding</keyword>
<keyword id="KW-1185">Reference proteome</keyword>
<keyword id="KW-0717">Septation</keyword>
<accession>O67679</accession>